<accession>B2V6U1</accession>
<organism>
    <name type="scientific">Sulfurihydrogenibium sp. (strain YO3AOP1)</name>
    <dbReference type="NCBI Taxonomy" id="436114"/>
    <lineage>
        <taxon>Bacteria</taxon>
        <taxon>Pseudomonadati</taxon>
        <taxon>Aquificota</taxon>
        <taxon>Aquificia</taxon>
        <taxon>Aquificales</taxon>
        <taxon>Hydrogenothermaceae</taxon>
        <taxon>Sulfurihydrogenibium</taxon>
    </lineage>
</organism>
<sequence length="243" mass="27336">MRLGVNIDHIATLREARKTTEPDPIKGALIAIEAGADQITLHLREDRRHIQDEDLFRLKCELKDTNIPINLEMAPTYEMQNIALEALPNNVTLVPEKRQEITTEGGLDVVSMIDYLKDFIKPIKQQGITVSLFIDPDYEQIDASVEVGADAIEIHTGEYANAYGKNVEKELERIKKAAKYAKEKGLKVYAGHGLTYQNVSEIAKIKEIEELNIGHSIIANAVFLGLYEAVKKMKEIILNARKE</sequence>
<protein>
    <recommendedName>
        <fullName evidence="1">Pyridoxine 5'-phosphate synthase</fullName>
        <shortName evidence="1">PNP synthase</shortName>
        <ecNumber evidence="1">2.6.99.2</ecNumber>
    </recommendedName>
</protein>
<dbReference type="EC" id="2.6.99.2" evidence="1"/>
<dbReference type="EMBL" id="CP001080">
    <property type="protein sequence ID" value="ACD67273.1"/>
    <property type="molecule type" value="Genomic_DNA"/>
</dbReference>
<dbReference type="RefSeq" id="WP_012460329.1">
    <property type="nucleotide sequence ID" value="NC_010730.1"/>
</dbReference>
<dbReference type="SMR" id="B2V6U1"/>
<dbReference type="STRING" id="436114.SYO3AOP1_1675"/>
<dbReference type="KEGG" id="sul:SYO3AOP1_1675"/>
<dbReference type="eggNOG" id="COG0854">
    <property type="taxonomic scope" value="Bacteria"/>
</dbReference>
<dbReference type="HOGENOM" id="CLU_074563_0_0_0"/>
<dbReference type="UniPathway" id="UPA00244">
    <property type="reaction ID" value="UER00313"/>
</dbReference>
<dbReference type="GO" id="GO:0005829">
    <property type="term" value="C:cytosol"/>
    <property type="evidence" value="ECO:0007669"/>
    <property type="project" value="TreeGrafter"/>
</dbReference>
<dbReference type="GO" id="GO:0033856">
    <property type="term" value="F:pyridoxine 5'-phosphate synthase activity"/>
    <property type="evidence" value="ECO:0007669"/>
    <property type="project" value="UniProtKB-EC"/>
</dbReference>
<dbReference type="GO" id="GO:0008615">
    <property type="term" value="P:pyridoxine biosynthetic process"/>
    <property type="evidence" value="ECO:0007669"/>
    <property type="project" value="UniProtKB-UniRule"/>
</dbReference>
<dbReference type="CDD" id="cd00003">
    <property type="entry name" value="PNPsynthase"/>
    <property type="match status" value="1"/>
</dbReference>
<dbReference type="Gene3D" id="3.20.20.70">
    <property type="entry name" value="Aldolase class I"/>
    <property type="match status" value="1"/>
</dbReference>
<dbReference type="HAMAP" id="MF_00279">
    <property type="entry name" value="PdxJ"/>
    <property type="match status" value="1"/>
</dbReference>
<dbReference type="InterPro" id="IPR013785">
    <property type="entry name" value="Aldolase_TIM"/>
</dbReference>
<dbReference type="InterPro" id="IPR004569">
    <property type="entry name" value="PyrdxlP_synth_PdxJ"/>
</dbReference>
<dbReference type="InterPro" id="IPR036130">
    <property type="entry name" value="Pyridoxine-5'_phos_synth"/>
</dbReference>
<dbReference type="NCBIfam" id="TIGR00559">
    <property type="entry name" value="pdxJ"/>
    <property type="match status" value="1"/>
</dbReference>
<dbReference type="NCBIfam" id="NF003625">
    <property type="entry name" value="PRK05265.1-3"/>
    <property type="match status" value="1"/>
</dbReference>
<dbReference type="NCBIfam" id="NF003627">
    <property type="entry name" value="PRK05265.1-5"/>
    <property type="match status" value="1"/>
</dbReference>
<dbReference type="PANTHER" id="PTHR30456">
    <property type="entry name" value="PYRIDOXINE 5'-PHOSPHATE SYNTHASE"/>
    <property type="match status" value="1"/>
</dbReference>
<dbReference type="PANTHER" id="PTHR30456:SF0">
    <property type="entry name" value="PYRIDOXINE 5'-PHOSPHATE SYNTHASE"/>
    <property type="match status" value="1"/>
</dbReference>
<dbReference type="Pfam" id="PF03740">
    <property type="entry name" value="PdxJ"/>
    <property type="match status" value="1"/>
</dbReference>
<dbReference type="SUPFAM" id="SSF63892">
    <property type="entry name" value="Pyridoxine 5'-phosphate synthase"/>
    <property type="match status" value="1"/>
</dbReference>
<feature type="chain" id="PRO_1000119383" description="Pyridoxine 5'-phosphate synthase">
    <location>
        <begin position="1"/>
        <end position="243"/>
    </location>
</feature>
<feature type="active site" description="Proton acceptor" evidence="1">
    <location>
        <position position="42"/>
    </location>
</feature>
<feature type="active site" description="Proton acceptor" evidence="1">
    <location>
        <position position="72"/>
    </location>
</feature>
<feature type="active site" description="Proton donor" evidence="1">
    <location>
        <position position="192"/>
    </location>
</feature>
<feature type="binding site" evidence="1">
    <location>
        <position position="6"/>
    </location>
    <ligand>
        <name>3-amino-2-oxopropyl phosphate</name>
        <dbReference type="ChEBI" id="CHEBI:57279"/>
    </ligand>
</feature>
<feature type="binding site" evidence="1">
    <location>
        <begin position="8"/>
        <end position="9"/>
    </location>
    <ligand>
        <name>1-deoxy-D-xylulose 5-phosphate</name>
        <dbReference type="ChEBI" id="CHEBI:57792"/>
    </ligand>
</feature>
<feature type="binding site" evidence="1">
    <location>
        <position position="17"/>
    </location>
    <ligand>
        <name>3-amino-2-oxopropyl phosphate</name>
        <dbReference type="ChEBI" id="CHEBI:57279"/>
    </ligand>
</feature>
<feature type="binding site" evidence="1">
    <location>
        <position position="44"/>
    </location>
    <ligand>
        <name>1-deoxy-D-xylulose 5-phosphate</name>
        <dbReference type="ChEBI" id="CHEBI:57792"/>
    </ligand>
</feature>
<feature type="binding site" evidence="1">
    <location>
        <position position="49"/>
    </location>
    <ligand>
        <name>1-deoxy-D-xylulose 5-phosphate</name>
        <dbReference type="ChEBI" id="CHEBI:57792"/>
    </ligand>
</feature>
<feature type="binding site" evidence="1">
    <location>
        <position position="102"/>
    </location>
    <ligand>
        <name>1-deoxy-D-xylulose 5-phosphate</name>
        <dbReference type="ChEBI" id="CHEBI:57792"/>
    </ligand>
</feature>
<feature type="binding site" evidence="1">
    <location>
        <position position="193"/>
    </location>
    <ligand>
        <name>3-amino-2-oxopropyl phosphate</name>
        <dbReference type="ChEBI" id="CHEBI:57279"/>
    </ligand>
</feature>
<feature type="binding site" evidence="1">
    <location>
        <begin position="214"/>
        <end position="215"/>
    </location>
    <ligand>
        <name>3-amino-2-oxopropyl phosphate</name>
        <dbReference type="ChEBI" id="CHEBI:57279"/>
    </ligand>
</feature>
<feature type="site" description="Transition state stabilizer" evidence="1">
    <location>
        <position position="153"/>
    </location>
</feature>
<gene>
    <name evidence="1" type="primary">pdxJ</name>
    <name type="ordered locus">SYO3AOP1_1675</name>
</gene>
<keyword id="KW-0963">Cytoplasm</keyword>
<keyword id="KW-0664">Pyridoxine biosynthesis</keyword>
<keyword id="KW-0808">Transferase</keyword>
<reference key="1">
    <citation type="journal article" date="2009" name="J. Bacteriol.">
        <title>Complete and draft genome sequences of six members of the Aquificales.</title>
        <authorList>
            <person name="Reysenbach A.-L."/>
            <person name="Hamamura N."/>
            <person name="Podar M."/>
            <person name="Griffiths E."/>
            <person name="Ferreira S."/>
            <person name="Hochstein R."/>
            <person name="Heidelberg J."/>
            <person name="Johnson J."/>
            <person name="Mead D."/>
            <person name="Pohorille A."/>
            <person name="Sarmiento M."/>
            <person name="Schweighofer K."/>
            <person name="Seshadri R."/>
            <person name="Voytek M.A."/>
        </authorList>
    </citation>
    <scope>NUCLEOTIDE SEQUENCE [LARGE SCALE GENOMIC DNA]</scope>
    <source>
        <strain>YO3AOP1</strain>
    </source>
</reference>
<proteinExistence type="inferred from homology"/>
<comment type="function">
    <text evidence="1">Catalyzes the complicated ring closure reaction between the two acyclic compounds 1-deoxy-D-xylulose-5-phosphate (DXP) and 3-amino-2-oxopropyl phosphate (1-amino-acetone-3-phosphate or AAP) to form pyridoxine 5'-phosphate (PNP) and inorganic phosphate.</text>
</comment>
<comment type="catalytic activity">
    <reaction evidence="1">
        <text>3-amino-2-oxopropyl phosphate + 1-deoxy-D-xylulose 5-phosphate = pyridoxine 5'-phosphate + phosphate + 2 H2O + H(+)</text>
        <dbReference type="Rhea" id="RHEA:15265"/>
        <dbReference type="ChEBI" id="CHEBI:15377"/>
        <dbReference type="ChEBI" id="CHEBI:15378"/>
        <dbReference type="ChEBI" id="CHEBI:43474"/>
        <dbReference type="ChEBI" id="CHEBI:57279"/>
        <dbReference type="ChEBI" id="CHEBI:57792"/>
        <dbReference type="ChEBI" id="CHEBI:58589"/>
        <dbReference type="EC" id="2.6.99.2"/>
    </reaction>
</comment>
<comment type="pathway">
    <text evidence="1">Cofactor biosynthesis; pyridoxine 5'-phosphate biosynthesis; pyridoxine 5'-phosphate from D-erythrose 4-phosphate: step 5/5.</text>
</comment>
<comment type="subunit">
    <text evidence="1">Homooctamer; tetramer of dimers.</text>
</comment>
<comment type="subcellular location">
    <subcellularLocation>
        <location evidence="1">Cytoplasm</location>
    </subcellularLocation>
</comment>
<comment type="similarity">
    <text evidence="1">Belongs to the PNP synthase family.</text>
</comment>
<evidence type="ECO:0000255" key="1">
    <source>
        <dbReference type="HAMAP-Rule" id="MF_00279"/>
    </source>
</evidence>
<name>PDXJ_SULSY</name>